<keyword id="KW-0175">Coiled coil</keyword>
<keyword id="KW-0472">Membrane</keyword>
<keyword id="KW-0496">Mitochondrion</keyword>
<keyword id="KW-1185">Reference proteome</keyword>
<keyword id="KW-0812">Transmembrane</keyword>
<keyword id="KW-1133">Transmembrane helix</keyword>
<reference key="1">
    <citation type="journal article" date="2009" name="Genome Res.">
        <title>Comparative genomics of protoploid Saccharomycetaceae.</title>
        <authorList>
            <consortium name="The Genolevures Consortium"/>
            <person name="Souciet J.-L."/>
            <person name="Dujon B."/>
            <person name="Gaillardin C."/>
            <person name="Johnston M."/>
            <person name="Baret P.V."/>
            <person name="Cliften P."/>
            <person name="Sherman D.J."/>
            <person name="Weissenbach J."/>
            <person name="Westhof E."/>
            <person name="Wincker P."/>
            <person name="Jubin C."/>
            <person name="Poulain J."/>
            <person name="Barbe V."/>
            <person name="Segurens B."/>
            <person name="Artiguenave F."/>
            <person name="Anthouard V."/>
            <person name="Vacherie B."/>
            <person name="Val M.-E."/>
            <person name="Fulton R.S."/>
            <person name="Minx P."/>
            <person name="Wilson R."/>
            <person name="Durrens P."/>
            <person name="Jean G."/>
            <person name="Marck C."/>
            <person name="Martin T."/>
            <person name="Nikolski M."/>
            <person name="Rolland T."/>
            <person name="Seret M.-L."/>
            <person name="Casaregola S."/>
            <person name="Despons L."/>
            <person name="Fairhead C."/>
            <person name="Fischer G."/>
            <person name="Lafontaine I."/>
            <person name="Leh V."/>
            <person name="Lemaire M."/>
            <person name="de Montigny J."/>
            <person name="Neuveglise C."/>
            <person name="Thierry A."/>
            <person name="Blanc-Lenfle I."/>
            <person name="Bleykasten C."/>
            <person name="Diffels J."/>
            <person name="Fritsch E."/>
            <person name="Frangeul L."/>
            <person name="Goeffon A."/>
            <person name="Jauniaux N."/>
            <person name="Kachouri-Lafond R."/>
            <person name="Payen C."/>
            <person name="Potier S."/>
            <person name="Pribylova L."/>
            <person name="Ozanne C."/>
            <person name="Richard G.-F."/>
            <person name="Sacerdot C."/>
            <person name="Straub M.-L."/>
            <person name="Talla E."/>
        </authorList>
    </citation>
    <scope>NUCLEOTIDE SEQUENCE [LARGE SCALE GENOMIC DNA]</scope>
    <source>
        <strain>ATCC 2623 / CBS 732 / BCRC 21506 / NBRC 1130 / NCYC 568 / NRRL Y-229</strain>
    </source>
</reference>
<feature type="chain" id="PRO_0000399667" description="Respiratory supercomplex factor 1, mitochondrial">
    <location>
        <begin position="1"/>
        <end position="160"/>
    </location>
</feature>
<feature type="transmembrane region" description="Helical" evidence="3">
    <location>
        <begin position="33"/>
        <end position="49"/>
    </location>
</feature>
<feature type="transmembrane region" description="Helical" evidence="3">
    <location>
        <begin position="67"/>
        <end position="89"/>
    </location>
</feature>
<feature type="domain" description="HIG1" evidence="3">
    <location>
        <begin position="5"/>
        <end position="96"/>
    </location>
</feature>
<feature type="coiled-coil region" evidence="2">
    <location>
        <begin position="88"/>
        <end position="160"/>
    </location>
</feature>
<dbReference type="EMBL" id="CU928176">
    <property type="protein sequence ID" value="CAR28093.1"/>
    <property type="molecule type" value="Genomic_DNA"/>
</dbReference>
<dbReference type="RefSeq" id="XP_002497026.1">
    <property type="nucleotide sequence ID" value="XM_002496981.1"/>
</dbReference>
<dbReference type="SMR" id="C5DWC4"/>
<dbReference type="FunCoup" id="C5DWC4">
    <property type="interactions" value="106"/>
</dbReference>
<dbReference type="STRING" id="559307.C5DWC4"/>
<dbReference type="GeneID" id="8204289"/>
<dbReference type="KEGG" id="zro:ZYRO0D13684g"/>
<dbReference type="HOGENOM" id="CLU_087356_1_0_1"/>
<dbReference type="InParanoid" id="C5DWC4"/>
<dbReference type="Proteomes" id="UP000008536">
    <property type="component" value="Chromosome D"/>
</dbReference>
<dbReference type="GO" id="GO:0031966">
    <property type="term" value="C:mitochondrial membrane"/>
    <property type="evidence" value="ECO:0007669"/>
    <property type="project" value="UniProtKB-SubCell"/>
</dbReference>
<dbReference type="GO" id="GO:0097250">
    <property type="term" value="P:mitochondrial respirasome assembly"/>
    <property type="evidence" value="ECO:0007669"/>
    <property type="project" value="TreeGrafter"/>
</dbReference>
<dbReference type="Gene3D" id="6.10.140.1320">
    <property type="match status" value="1"/>
</dbReference>
<dbReference type="InterPro" id="IPR007667">
    <property type="entry name" value="Hypoxia_induced_domain"/>
</dbReference>
<dbReference type="InterPro" id="IPR050355">
    <property type="entry name" value="RCF1"/>
</dbReference>
<dbReference type="PANTHER" id="PTHR12297:SF3">
    <property type="entry name" value="HIG1 DOMAIN FAMILY MEMBER 1A"/>
    <property type="match status" value="1"/>
</dbReference>
<dbReference type="PANTHER" id="PTHR12297">
    <property type="entry name" value="HYPOXIA-INDUCBILE GENE 1 HIG1 -RELATED"/>
    <property type="match status" value="1"/>
</dbReference>
<dbReference type="Pfam" id="PF04588">
    <property type="entry name" value="HIG_1_N"/>
    <property type="match status" value="1"/>
</dbReference>
<dbReference type="PROSITE" id="PS51503">
    <property type="entry name" value="HIG1"/>
    <property type="match status" value="1"/>
</dbReference>
<organism>
    <name type="scientific">Zygosaccharomyces rouxii (strain ATCC 2623 / CBS 732 / NBRC 1130 / NCYC 568 / NRRL Y-229)</name>
    <dbReference type="NCBI Taxonomy" id="559307"/>
    <lineage>
        <taxon>Eukaryota</taxon>
        <taxon>Fungi</taxon>
        <taxon>Dikarya</taxon>
        <taxon>Ascomycota</taxon>
        <taxon>Saccharomycotina</taxon>
        <taxon>Saccharomycetes</taxon>
        <taxon>Saccharomycetales</taxon>
        <taxon>Saccharomycetaceae</taxon>
        <taxon>Zygosaccharomyces</taxon>
    </lineage>
</organism>
<gene>
    <name type="primary">RCF1</name>
    <name type="synonym">AIM31</name>
    <name type="ordered locus">ZYRO0D13684g</name>
</gene>
<name>RCF1_ZYGRC</name>
<sequence>MSGLPSSFDSKEASVDELPFLEKVKFHCKQQPLVPLGTLLTTGAVALAAQNVRTGNKKKAQVWFRWRVGLQAATLVALVAGSFIYGSSLKEKKSEEEKMREKAKMRELLWIQELERRDQETQYRRKRAELARQKMQENEAAVSRLQKELKDLESHIKNEK</sequence>
<evidence type="ECO:0000250" key="1"/>
<evidence type="ECO:0000255" key="2"/>
<evidence type="ECO:0000255" key="3">
    <source>
        <dbReference type="PROSITE-ProRule" id="PRU00836"/>
    </source>
</evidence>
<evidence type="ECO:0000305" key="4"/>
<comment type="function">
    <text evidence="1">Cytochrome c oxidase subunit which plays a role in assembly of respiratory supercomplexes.</text>
</comment>
<comment type="subunit">
    <text evidence="1">Associates with the respiratory chain complex III/complex IV supercomplex.</text>
</comment>
<comment type="subcellular location">
    <subcellularLocation>
        <location evidence="3">Mitochondrion membrane</location>
        <topology evidence="3">Multi-pass membrane protein</topology>
    </subcellularLocation>
</comment>
<comment type="similarity">
    <text evidence="4">Belongs to the RCF1 family.</text>
</comment>
<accession>C5DWC4</accession>
<proteinExistence type="inferred from homology"/>
<protein>
    <recommendedName>
        <fullName>Respiratory supercomplex factor 1, mitochondrial</fullName>
    </recommendedName>
</protein>